<organism>
    <name type="scientific">Staphylococcus aureus (strain USA300)</name>
    <dbReference type="NCBI Taxonomy" id="367830"/>
    <lineage>
        <taxon>Bacteria</taxon>
        <taxon>Bacillati</taxon>
        <taxon>Bacillota</taxon>
        <taxon>Bacilli</taxon>
        <taxon>Bacillales</taxon>
        <taxon>Staphylococcaceae</taxon>
        <taxon>Staphylococcus</taxon>
    </lineage>
</organism>
<feature type="chain" id="PRO_0000299432" description="UPF0478 protein SAUSA300_1685">
    <location>
        <begin position="1"/>
        <end position="163"/>
    </location>
</feature>
<feature type="transmembrane region" description="Helical" evidence="1">
    <location>
        <begin position="7"/>
        <end position="27"/>
    </location>
</feature>
<comment type="subcellular location">
    <subcellularLocation>
        <location evidence="2">Cell membrane</location>
        <topology evidence="2">Single-pass membrane protein</topology>
    </subcellularLocation>
</comment>
<comment type="similarity">
    <text evidence="2">Belongs to the UPF0478 family.</text>
</comment>
<accession>Q2FFZ9</accession>
<reference key="1">
    <citation type="journal article" date="2006" name="Lancet">
        <title>Complete genome sequence of USA300, an epidemic clone of community-acquired meticillin-resistant Staphylococcus aureus.</title>
        <authorList>
            <person name="Diep B.A."/>
            <person name="Gill S.R."/>
            <person name="Chang R.F."/>
            <person name="Phan T.H."/>
            <person name="Chen J.H."/>
            <person name="Davidson M.G."/>
            <person name="Lin F."/>
            <person name="Lin J."/>
            <person name="Carleton H.A."/>
            <person name="Mongodin E.F."/>
            <person name="Sensabaugh G.F."/>
            <person name="Perdreau-Remington F."/>
        </authorList>
    </citation>
    <scope>NUCLEOTIDE SEQUENCE [LARGE SCALE GENOMIC DNA]</scope>
    <source>
        <strain>USA300</strain>
    </source>
</reference>
<sequence length="163" mass="18002">MDWILPIAGIIAAIAFLILCIGIVAVLNSVKKNLDYVAKTLDGVEGQVQGITRETTDLLHKVNRLTEDIQGKVDRLNSVVDAVKGIGDSVQTLNSSVDRVTNSITHNISQNEDKISQVVQWSNVAMEIADKWQNRHYRRGSANYKANNVATDANHSYTSRVDK</sequence>
<gene>
    <name type="ordered locus">SAUSA300_1685</name>
</gene>
<keyword id="KW-1003">Cell membrane</keyword>
<keyword id="KW-0472">Membrane</keyword>
<keyword id="KW-0812">Transmembrane</keyword>
<keyword id="KW-1133">Transmembrane helix</keyword>
<name>Y1685_STAA3</name>
<evidence type="ECO:0000255" key="1"/>
<evidence type="ECO:0000305" key="2"/>
<dbReference type="EMBL" id="CP000255">
    <property type="protein sequence ID" value="ABD22848.1"/>
    <property type="molecule type" value="Genomic_DNA"/>
</dbReference>
<dbReference type="RefSeq" id="WP_000383814.1">
    <property type="nucleotide sequence ID" value="NZ_CP027476.1"/>
</dbReference>
<dbReference type="SMR" id="Q2FFZ9"/>
<dbReference type="KEGG" id="saa:SAUSA300_1685"/>
<dbReference type="HOGENOM" id="CLU_115870_0_0_9"/>
<dbReference type="OMA" id="QWGNVAI"/>
<dbReference type="Proteomes" id="UP000001939">
    <property type="component" value="Chromosome"/>
</dbReference>
<dbReference type="GO" id="GO:0005886">
    <property type="term" value="C:plasma membrane"/>
    <property type="evidence" value="ECO:0007669"/>
    <property type="project" value="UniProtKB-SubCell"/>
</dbReference>
<dbReference type="Gene3D" id="1.10.287.950">
    <property type="entry name" value="Methyl-accepting chemotaxis protein"/>
    <property type="match status" value="1"/>
</dbReference>
<dbReference type="InterPro" id="IPR009293">
    <property type="entry name" value="UPF0478"/>
</dbReference>
<dbReference type="PANTHER" id="PTHR40070">
    <property type="entry name" value="UPF0478 PROTEIN YTXG"/>
    <property type="match status" value="1"/>
</dbReference>
<dbReference type="PANTHER" id="PTHR40070:SF1">
    <property type="entry name" value="UPF0478 PROTEIN YTXG"/>
    <property type="match status" value="1"/>
</dbReference>
<dbReference type="Pfam" id="PF06103">
    <property type="entry name" value="DUF948"/>
    <property type="match status" value="1"/>
</dbReference>
<dbReference type="SUPFAM" id="SSF58104">
    <property type="entry name" value="Methyl-accepting chemotaxis protein (MCP) signaling domain"/>
    <property type="match status" value="1"/>
</dbReference>
<protein>
    <recommendedName>
        <fullName>UPF0478 protein SAUSA300_1685</fullName>
    </recommendedName>
</protein>
<proteinExistence type="inferred from homology"/>